<evidence type="ECO:0000255" key="1">
    <source>
        <dbReference type="HAMAP-Rule" id="MF_00721"/>
    </source>
</evidence>
<evidence type="ECO:0000305" key="2"/>
<comment type="similarity">
    <text evidence="1">Belongs to the eukaryotic ribosomal protein eL14 family.</text>
</comment>
<sequence length="103" mass="11364">MVKVIDIGRVVVKVLGREAGRKAVVVDIVDENYVVITGPKPITGVKRRRVNINHIEPTDKKIDIKRGASDDEVAKAIEAAGLVEYMRERVKPSFVGITKAETK</sequence>
<protein>
    <recommendedName>
        <fullName evidence="1">Large ribosomal subunit protein eL14</fullName>
    </recommendedName>
    <alternativeName>
        <fullName evidence="2">50S ribosomal protein L14e</fullName>
    </alternativeName>
</protein>
<organism>
    <name type="scientific">Pyrobaculum aerophilum (strain ATCC 51768 / DSM 7523 / JCM 9630 / CIP 104966 / NBRC 100827 / IM2)</name>
    <dbReference type="NCBI Taxonomy" id="178306"/>
    <lineage>
        <taxon>Archaea</taxon>
        <taxon>Thermoproteota</taxon>
        <taxon>Thermoprotei</taxon>
        <taxon>Thermoproteales</taxon>
        <taxon>Thermoproteaceae</taxon>
        <taxon>Pyrobaculum</taxon>
    </lineage>
</organism>
<dbReference type="EMBL" id="AE009441">
    <property type="protein sequence ID" value="AAL63081.1"/>
    <property type="molecule type" value="Genomic_DNA"/>
</dbReference>
<dbReference type="RefSeq" id="WP_011007553.1">
    <property type="nucleotide sequence ID" value="NC_003364.1"/>
</dbReference>
<dbReference type="SMR" id="Q8ZYB4"/>
<dbReference type="FunCoup" id="Q8ZYB4">
    <property type="interactions" value="132"/>
</dbReference>
<dbReference type="STRING" id="178306.PAE0862"/>
<dbReference type="EnsemblBacteria" id="AAL63081">
    <property type="protein sequence ID" value="AAL63081"/>
    <property type="gene ID" value="PAE0862"/>
</dbReference>
<dbReference type="GeneID" id="1465313"/>
<dbReference type="KEGG" id="pai:PAE0862"/>
<dbReference type="PATRIC" id="fig|178306.9.peg.633"/>
<dbReference type="eggNOG" id="arCOG04167">
    <property type="taxonomic scope" value="Archaea"/>
</dbReference>
<dbReference type="HOGENOM" id="CLU_183474_0_0_2"/>
<dbReference type="InParanoid" id="Q8ZYB4"/>
<dbReference type="Proteomes" id="UP000002439">
    <property type="component" value="Chromosome"/>
</dbReference>
<dbReference type="GO" id="GO:0022625">
    <property type="term" value="C:cytosolic large ribosomal subunit"/>
    <property type="evidence" value="ECO:0000318"/>
    <property type="project" value="GO_Central"/>
</dbReference>
<dbReference type="GO" id="GO:0003723">
    <property type="term" value="F:RNA binding"/>
    <property type="evidence" value="ECO:0000318"/>
    <property type="project" value="GO_Central"/>
</dbReference>
<dbReference type="GO" id="GO:0003735">
    <property type="term" value="F:structural constituent of ribosome"/>
    <property type="evidence" value="ECO:0000318"/>
    <property type="project" value="GO_Central"/>
</dbReference>
<dbReference type="GO" id="GO:0042273">
    <property type="term" value="P:ribosomal large subunit biogenesis"/>
    <property type="evidence" value="ECO:0000318"/>
    <property type="project" value="GO_Central"/>
</dbReference>
<dbReference type="GO" id="GO:0006412">
    <property type="term" value="P:translation"/>
    <property type="evidence" value="ECO:0007669"/>
    <property type="project" value="UniProtKB-UniRule"/>
</dbReference>
<dbReference type="CDD" id="cd06088">
    <property type="entry name" value="KOW_RPL14"/>
    <property type="match status" value="1"/>
</dbReference>
<dbReference type="FunFam" id="2.30.30.30:FF:000045">
    <property type="entry name" value="50S ribosomal protein L14e"/>
    <property type="match status" value="1"/>
</dbReference>
<dbReference type="Gene3D" id="2.30.30.30">
    <property type="match status" value="1"/>
</dbReference>
<dbReference type="HAMAP" id="MF_00721">
    <property type="entry name" value="Ribosomal_eL14"/>
    <property type="match status" value="1"/>
</dbReference>
<dbReference type="InterPro" id="IPR014722">
    <property type="entry name" value="Rib_uL2_dom2"/>
</dbReference>
<dbReference type="InterPro" id="IPR039660">
    <property type="entry name" value="Ribosomal_eL14"/>
</dbReference>
<dbReference type="InterPro" id="IPR023651">
    <property type="entry name" value="Ribosomal_eL14_arc"/>
</dbReference>
<dbReference type="InterPro" id="IPR041985">
    <property type="entry name" value="Ribosomal_eL14_KOW"/>
</dbReference>
<dbReference type="InterPro" id="IPR008991">
    <property type="entry name" value="Translation_prot_SH3-like_sf"/>
</dbReference>
<dbReference type="NCBIfam" id="NF003320">
    <property type="entry name" value="PRK04333.1"/>
    <property type="match status" value="1"/>
</dbReference>
<dbReference type="PANTHER" id="PTHR11127">
    <property type="entry name" value="60S RIBOSOMAL PROTEIN L14"/>
    <property type="match status" value="1"/>
</dbReference>
<dbReference type="PANTHER" id="PTHR11127:SF2">
    <property type="entry name" value="LARGE RIBOSOMAL SUBUNIT PROTEIN EL14"/>
    <property type="match status" value="1"/>
</dbReference>
<dbReference type="SUPFAM" id="SSF50104">
    <property type="entry name" value="Translation proteins SH3-like domain"/>
    <property type="match status" value="1"/>
</dbReference>
<gene>
    <name evidence="1" type="primary">rpl14e</name>
    <name type="ordered locus">PAE0862</name>
</gene>
<name>RL14E_PYRAE</name>
<keyword id="KW-1185">Reference proteome</keyword>
<keyword id="KW-0687">Ribonucleoprotein</keyword>
<keyword id="KW-0689">Ribosomal protein</keyword>
<reference key="1">
    <citation type="journal article" date="2002" name="Proc. Natl. Acad. Sci. U.S.A.">
        <title>Genome sequence of the hyperthermophilic crenarchaeon Pyrobaculum aerophilum.</title>
        <authorList>
            <person name="Fitz-Gibbon S.T."/>
            <person name="Ladner H."/>
            <person name="Kim U.-J."/>
            <person name="Stetter K.O."/>
            <person name="Simon M.I."/>
            <person name="Miller J.H."/>
        </authorList>
    </citation>
    <scope>NUCLEOTIDE SEQUENCE [LARGE SCALE GENOMIC DNA]</scope>
    <source>
        <strain>ATCC 51768 / DSM 7523 / JCM 9630 / CIP 104966 / NBRC 100827 / IM2</strain>
    </source>
</reference>
<accession>Q8ZYB4</accession>
<feature type="chain" id="PRO_0000132051" description="Large ribosomal subunit protein eL14">
    <location>
        <begin position="1"/>
        <end position="103"/>
    </location>
</feature>
<proteinExistence type="inferred from homology"/>